<protein>
    <recommendedName>
        <fullName>Ecdysteroid UDP-glucosyltransferase</fullName>
        <ecNumber>2.4.1.-</ecNumber>
    </recommendedName>
</protein>
<reference key="1">
    <citation type="journal article" date="1997" name="Virology">
        <title>The sequence of the Orgyia pseudotsugata multinucleocapsid nuclear polyhedrosis virus genome.</title>
        <authorList>
            <person name="Ahrens C.H."/>
            <person name="Russell R.R."/>
            <person name="Funk C.J."/>
            <person name="Evans J."/>
            <person name="Harwood S."/>
            <person name="Rohrmann G.F."/>
        </authorList>
    </citation>
    <scope>NUCLEOTIDE SEQUENCE [LARGE SCALE GENOMIC DNA]</scope>
</reference>
<reference key="2">
    <citation type="journal article" date="1993" name="Virology">
        <title>Identification and characterization of a putative origin of DNA replication in the genome of a baculovirus pathogenic for Orgyia pseudotsugata.</title>
        <authorList>
            <person name="Pearson M.N."/>
            <person name="Bjornson R.M."/>
            <person name="Ahrens C.H."/>
            <person name="Rohrmann G.F."/>
        </authorList>
    </citation>
    <scope>NUCLEOTIDE SEQUENCE [GENOMIC DNA] OF 1-293</scope>
</reference>
<feature type="signal peptide" evidence="2">
    <location>
        <begin position="1"/>
        <end position="17"/>
    </location>
</feature>
<feature type="chain" id="PRO_0000036062" description="Ecdysteroid UDP-glucosyltransferase">
    <location>
        <begin position="18"/>
        <end position="489"/>
    </location>
</feature>
<name>UDPE_NPVOP</name>
<evidence type="ECO:0000250" key="1"/>
<evidence type="ECO:0000255" key="2"/>
<evidence type="ECO:0000305" key="3"/>
<comment type="function">
    <text evidence="1">Catalyzes the transfer of glucose from UDP-glucose to ecdysteroids which are insect molting hormones. Expression of egt interferes with normal insect development and block molting (By similarity).</text>
</comment>
<comment type="similarity">
    <text evidence="3">Belongs to the UDP-glycosyltransferase family.</text>
</comment>
<gene>
    <name type="primary">EGT</name>
    <name type="synonym">UGT21A6</name>
    <name type="ORF">ORF14</name>
</gene>
<accession>Q65363</accession>
<accession>O10275</accession>
<sequence>MVFLIIALTLLATGARAASILAVLPTPAYSHHVVYRAYVHALVKNCHNVTVIKPQLLDYAVQDECGRVEQIDADMSAQQYKKLVASSGVFRKRGVVADETTVTADNYMGLIEMFKDQFDNANVRRFLSTNRTFDAVVVEAFADYALVFGHLFRPAPVIQIAPGYGLAENFERRRAVARHPLHYPTFGAAALTRRGGALSEWRLLNEFELLARRSDELLKQQFGKSTPTIRQLRDNVQLLLLNLHPVYDNNRPVPPSVQYLGGGLHLAQALPQRLDAPLERRLNESVDGAVYVSFGSGIDTNSIHAEFLQMLLDTFANLNNYTVLWKVDDAVAASVALPRNVLAQKWFSQTAVLRHKNVVAFVTQAGLQSSDEALQARVPMVCLPMMGDQFHHARKLQQFGVARALDTAAVSAPQLQLAIREVIADGEAYRARIDKLRAVVEHDAAPDEKAVKFTERVIKFNNDVNWPARSLKTTAANMAYSDYFVRFPL</sequence>
<dbReference type="EC" id="2.4.1.-"/>
<dbReference type="EMBL" id="U75930">
    <property type="protein sequence ID" value="AAC59013.1"/>
    <property type="molecule type" value="Genomic_DNA"/>
</dbReference>
<dbReference type="EMBL" id="D17353">
    <property type="protein sequence ID" value="BAA04172.1"/>
    <property type="molecule type" value="Genomic_DNA"/>
</dbReference>
<dbReference type="RefSeq" id="NP_046170.1">
    <property type="nucleotide sequence ID" value="NC_001875.2"/>
</dbReference>
<dbReference type="SMR" id="Q65363"/>
<dbReference type="CAZy" id="GT1">
    <property type="family name" value="Glycosyltransferase Family 1"/>
</dbReference>
<dbReference type="KEGG" id="vg:912033"/>
<dbReference type="OrthoDB" id="5462at10239"/>
<dbReference type="Proteomes" id="UP000009248">
    <property type="component" value="Genome"/>
</dbReference>
<dbReference type="GO" id="GO:0008194">
    <property type="term" value="F:UDP-glycosyltransferase activity"/>
    <property type="evidence" value="ECO:0007669"/>
    <property type="project" value="InterPro"/>
</dbReference>
<dbReference type="CDD" id="cd03784">
    <property type="entry name" value="GT1_Gtf-like"/>
    <property type="match status" value="1"/>
</dbReference>
<dbReference type="FunFam" id="3.40.50.2000:FF:000021">
    <property type="entry name" value="UDP-glucuronosyltransferase"/>
    <property type="match status" value="1"/>
</dbReference>
<dbReference type="Gene3D" id="3.40.50.2000">
    <property type="entry name" value="Glycogen Phosphorylase B"/>
    <property type="match status" value="1"/>
</dbReference>
<dbReference type="InterPro" id="IPR016224">
    <property type="entry name" value="Ecdysteroid_UDP-Glc_Trfase"/>
</dbReference>
<dbReference type="InterPro" id="IPR050271">
    <property type="entry name" value="UDP-glycosyltransferase"/>
</dbReference>
<dbReference type="InterPro" id="IPR002213">
    <property type="entry name" value="UDP_glucos_trans"/>
</dbReference>
<dbReference type="InterPro" id="IPR035595">
    <property type="entry name" value="UDP_glycos_trans_CS"/>
</dbReference>
<dbReference type="PANTHER" id="PTHR48043">
    <property type="entry name" value="EG:EG0003.4 PROTEIN-RELATED"/>
    <property type="match status" value="1"/>
</dbReference>
<dbReference type="PANTHER" id="PTHR48043:SF145">
    <property type="entry name" value="FI06409P-RELATED"/>
    <property type="match status" value="1"/>
</dbReference>
<dbReference type="Pfam" id="PF00201">
    <property type="entry name" value="UDPGT"/>
    <property type="match status" value="1"/>
</dbReference>
<dbReference type="PIRSF" id="PIRSF000476">
    <property type="entry name" value="Ecdystd_UDP_glucosyltfrase"/>
    <property type="match status" value="1"/>
</dbReference>
<dbReference type="SUPFAM" id="SSF53756">
    <property type="entry name" value="UDP-Glycosyltransferase/glycogen phosphorylase"/>
    <property type="match status" value="1"/>
</dbReference>
<dbReference type="PROSITE" id="PS00375">
    <property type="entry name" value="UDPGT"/>
    <property type="match status" value="1"/>
</dbReference>
<organismHost>
    <name type="scientific">Orgyia pseudotsugata</name>
    <name type="common">Douglas-fir tussock moth</name>
    <dbReference type="NCBI Taxonomy" id="33414"/>
</organismHost>
<organism>
    <name type="scientific">Orgyia pseudotsugata multicapsid polyhedrosis virus</name>
    <name type="common">OpMNPV</name>
    <dbReference type="NCBI Taxonomy" id="262177"/>
    <lineage>
        <taxon>Viruses</taxon>
        <taxon>Viruses incertae sedis</taxon>
        <taxon>Naldaviricetes</taxon>
        <taxon>Lefavirales</taxon>
        <taxon>Baculoviridae</taxon>
        <taxon>Alphabaculovirus</taxon>
        <taxon>Alphabaculovirus orpseudotsugatae</taxon>
    </lineage>
</organism>
<proteinExistence type="inferred from homology"/>
<keyword id="KW-0328">Glycosyltransferase</keyword>
<keyword id="KW-1185">Reference proteome</keyword>
<keyword id="KW-0732">Signal</keyword>
<keyword id="KW-0808">Transferase</keyword>